<dbReference type="EC" id="3.6.1.9" evidence="1"/>
<dbReference type="EC" id="3.6.1.12" evidence="1"/>
<dbReference type="EC" id="3.6.1.-" evidence="1"/>
<dbReference type="EC" id="3.6.1.23" evidence="1"/>
<dbReference type="EMBL" id="AE005674">
    <property type="protein sequence ID" value="AAN43844.2"/>
    <property type="status" value="ALT_INIT"/>
    <property type="molecule type" value="Genomic_DNA"/>
</dbReference>
<dbReference type="EMBL" id="AE014073">
    <property type="protein sequence ID" value="AAP17663.1"/>
    <property type="status" value="ALT_INIT"/>
    <property type="molecule type" value="Genomic_DNA"/>
</dbReference>
<dbReference type="RefSeq" id="WP_001249889.1">
    <property type="nucleotide sequence ID" value="NZ_WPGW01000032.1"/>
</dbReference>
<dbReference type="SMR" id="Q83KB9"/>
<dbReference type="STRING" id="198214.SF2330"/>
<dbReference type="PaxDb" id="198214-SF2330"/>
<dbReference type="GeneID" id="93774923"/>
<dbReference type="KEGG" id="sfx:S2463"/>
<dbReference type="PATRIC" id="fig|623.156.peg.4163"/>
<dbReference type="HOGENOM" id="CLU_037162_31_0_6"/>
<dbReference type="Proteomes" id="UP000001006">
    <property type="component" value="Chromosome"/>
</dbReference>
<dbReference type="Proteomes" id="UP000002673">
    <property type="component" value="Chromosome"/>
</dbReference>
<dbReference type="GO" id="GO:0047840">
    <property type="term" value="F:dCTP diphosphatase activity"/>
    <property type="evidence" value="ECO:0007669"/>
    <property type="project" value="UniProtKB-EC"/>
</dbReference>
<dbReference type="GO" id="GO:0036218">
    <property type="term" value="F:dTTP diphosphatase activity"/>
    <property type="evidence" value="ECO:0007669"/>
    <property type="project" value="RHEA"/>
</dbReference>
<dbReference type="GO" id="GO:0004170">
    <property type="term" value="F:dUTP diphosphatase activity"/>
    <property type="evidence" value="ECO:0007669"/>
    <property type="project" value="UniProtKB-EC"/>
</dbReference>
<dbReference type="GO" id="GO:0000287">
    <property type="term" value="F:magnesium ion binding"/>
    <property type="evidence" value="ECO:0007669"/>
    <property type="project" value="UniProtKB-UniRule"/>
</dbReference>
<dbReference type="FunFam" id="3.90.79.10:FF:000039">
    <property type="entry name" value="Nucleoside triphosphatase NudI"/>
    <property type="match status" value="1"/>
</dbReference>
<dbReference type="Gene3D" id="3.90.79.10">
    <property type="entry name" value="Nucleoside Triphosphate Pyrophosphohydrolase"/>
    <property type="match status" value="1"/>
</dbReference>
<dbReference type="HAMAP" id="MF_01846">
    <property type="entry name" value="Nudix_NudI"/>
    <property type="match status" value="1"/>
</dbReference>
<dbReference type="InterPro" id="IPR023781">
    <property type="entry name" value="Nucleoside_triphosphatase_NudI"/>
</dbReference>
<dbReference type="InterPro" id="IPR020476">
    <property type="entry name" value="Nudix_hydrolase"/>
</dbReference>
<dbReference type="InterPro" id="IPR015797">
    <property type="entry name" value="NUDIX_hydrolase-like_dom_sf"/>
</dbReference>
<dbReference type="InterPro" id="IPR020084">
    <property type="entry name" value="NUDIX_hydrolase_CS"/>
</dbReference>
<dbReference type="InterPro" id="IPR000086">
    <property type="entry name" value="NUDIX_hydrolase_dom"/>
</dbReference>
<dbReference type="NCBIfam" id="NF012016">
    <property type="entry name" value="PRK15472.1"/>
    <property type="match status" value="1"/>
</dbReference>
<dbReference type="PANTHER" id="PTHR43046">
    <property type="entry name" value="GDP-MANNOSE MANNOSYL HYDROLASE"/>
    <property type="match status" value="1"/>
</dbReference>
<dbReference type="PANTHER" id="PTHR43046:SF14">
    <property type="entry name" value="MUTT_NUDIX FAMILY PROTEIN"/>
    <property type="match status" value="1"/>
</dbReference>
<dbReference type="Pfam" id="PF00293">
    <property type="entry name" value="NUDIX"/>
    <property type="match status" value="1"/>
</dbReference>
<dbReference type="PRINTS" id="PR00502">
    <property type="entry name" value="NUDIXFAMILY"/>
</dbReference>
<dbReference type="SUPFAM" id="SSF55811">
    <property type="entry name" value="Nudix"/>
    <property type="match status" value="1"/>
</dbReference>
<dbReference type="PROSITE" id="PS51462">
    <property type="entry name" value="NUDIX"/>
    <property type="match status" value="1"/>
</dbReference>
<dbReference type="PROSITE" id="PS00893">
    <property type="entry name" value="NUDIX_BOX"/>
    <property type="match status" value="1"/>
</dbReference>
<protein>
    <recommendedName>
        <fullName evidence="1">Nucleoside triphosphatase NudI</fullName>
        <ecNumber evidence="1">3.6.1.9</ecNumber>
    </recommendedName>
    <alternativeName>
        <fullName evidence="1">Nucleotide diphosphatase NudI</fullName>
    </alternativeName>
    <alternativeName>
        <fullName evidence="1">Pyrimidine deoxynucleoside triphosphate diphosphatase</fullName>
    </alternativeName>
    <alternativeName>
        <fullName evidence="1">dCTP diphosphatase</fullName>
        <ecNumber evidence="1">3.6.1.12</ecNumber>
    </alternativeName>
    <alternativeName>
        <fullName evidence="1">dTTP diphosphatase</fullName>
        <ecNumber evidence="1">3.6.1.-</ecNumber>
    </alternativeName>
    <alternativeName>
        <fullName evidence="1">dUTP diphosphatase</fullName>
        <ecNumber evidence="1">3.6.1.23</ecNumber>
    </alternativeName>
</protein>
<name>NUDI_SHIFL</name>
<sequence>MRQRTIVCPLIQNDGAYLLCKMADDRGVFPGQWALSGGGVESGERIEEALRREIREELGEQLLLTEITPWTFSDDIRTKTYADGRKEEIYMIYLIFDCVSANREVKINEEFQDYAWVKPEDLVHYDLNVATRKTLRLKGLL</sequence>
<reference key="1">
    <citation type="journal article" date="2002" name="Nucleic Acids Res.">
        <title>Genome sequence of Shigella flexneri 2a: insights into pathogenicity through comparison with genomes of Escherichia coli K12 and O157.</title>
        <authorList>
            <person name="Jin Q."/>
            <person name="Yuan Z."/>
            <person name="Xu J."/>
            <person name="Wang Y."/>
            <person name="Shen Y."/>
            <person name="Lu W."/>
            <person name="Wang J."/>
            <person name="Liu H."/>
            <person name="Yang J."/>
            <person name="Yang F."/>
            <person name="Zhang X."/>
            <person name="Zhang J."/>
            <person name="Yang G."/>
            <person name="Wu H."/>
            <person name="Qu D."/>
            <person name="Dong J."/>
            <person name="Sun L."/>
            <person name="Xue Y."/>
            <person name="Zhao A."/>
            <person name="Gao Y."/>
            <person name="Zhu J."/>
            <person name="Kan B."/>
            <person name="Ding K."/>
            <person name="Chen S."/>
            <person name="Cheng H."/>
            <person name="Yao Z."/>
            <person name="He B."/>
            <person name="Chen R."/>
            <person name="Ma D."/>
            <person name="Qiang B."/>
            <person name="Wen Y."/>
            <person name="Hou Y."/>
            <person name="Yu J."/>
        </authorList>
    </citation>
    <scope>NUCLEOTIDE SEQUENCE [LARGE SCALE GENOMIC DNA]</scope>
    <source>
        <strain>301 / Serotype 2a</strain>
    </source>
</reference>
<reference key="2">
    <citation type="journal article" date="2003" name="Infect. Immun.">
        <title>Complete genome sequence and comparative genomics of Shigella flexneri serotype 2a strain 2457T.</title>
        <authorList>
            <person name="Wei J."/>
            <person name="Goldberg M.B."/>
            <person name="Burland V."/>
            <person name="Venkatesan M.M."/>
            <person name="Deng W."/>
            <person name="Fournier G."/>
            <person name="Mayhew G.F."/>
            <person name="Plunkett G. III"/>
            <person name="Rose D.J."/>
            <person name="Darling A."/>
            <person name="Mau B."/>
            <person name="Perna N.T."/>
            <person name="Payne S.M."/>
            <person name="Runyen-Janecky L.J."/>
            <person name="Zhou S."/>
            <person name="Schwartz D.C."/>
            <person name="Blattner F.R."/>
        </authorList>
    </citation>
    <scope>NUCLEOTIDE SEQUENCE [LARGE SCALE GENOMIC DNA]</scope>
    <source>
        <strain>ATCC 700930 / 2457T / Serotype 2a</strain>
    </source>
</reference>
<evidence type="ECO:0000255" key="1">
    <source>
        <dbReference type="HAMAP-Rule" id="MF_01846"/>
    </source>
</evidence>
<evidence type="ECO:0000305" key="2"/>
<feature type="chain" id="PRO_0000342141" description="Nucleoside triphosphatase NudI">
    <location>
        <begin position="1"/>
        <end position="141"/>
    </location>
</feature>
<feature type="domain" description="Nudix hydrolase" evidence="1">
    <location>
        <begin position="1"/>
        <end position="141"/>
    </location>
</feature>
<feature type="short sequence motif" description="Nudix box">
    <location>
        <begin position="38"/>
        <end position="59"/>
    </location>
</feature>
<gene>
    <name evidence="1" type="primary">nudI</name>
    <name type="ordered locus">SF2330</name>
    <name type="ordered locus">S2463</name>
</gene>
<organism>
    <name type="scientific">Shigella flexneri</name>
    <dbReference type="NCBI Taxonomy" id="623"/>
    <lineage>
        <taxon>Bacteria</taxon>
        <taxon>Pseudomonadati</taxon>
        <taxon>Pseudomonadota</taxon>
        <taxon>Gammaproteobacteria</taxon>
        <taxon>Enterobacterales</taxon>
        <taxon>Enterobacteriaceae</taxon>
        <taxon>Shigella</taxon>
    </lineage>
</organism>
<comment type="function">
    <text evidence="1">Catalyzes the hydrolysis of nucleoside triphosphates, with a preference for pyrimidine deoxynucleoside triphosphates (dUTP, dTTP and dCTP).</text>
</comment>
<comment type="catalytic activity">
    <reaction evidence="1">
        <text>a ribonucleoside 5'-triphosphate + H2O = a ribonucleoside 5'-phosphate + diphosphate + H(+)</text>
        <dbReference type="Rhea" id="RHEA:23996"/>
        <dbReference type="ChEBI" id="CHEBI:15377"/>
        <dbReference type="ChEBI" id="CHEBI:15378"/>
        <dbReference type="ChEBI" id="CHEBI:33019"/>
        <dbReference type="ChEBI" id="CHEBI:58043"/>
        <dbReference type="ChEBI" id="CHEBI:61557"/>
        <dbReference type="EC" id="3.6.1.9"/>
    </reaction>
</comment>
<comment type="catalytic activity">
    <reaction evidence="1">
        <text>a 2'-deoxyribonucleoside 5'-triphosphate + H2O = a 2'-deoxyribonucleoside 5'-phosphate + diphosphate + H(+)</text>
        <dbReference type="Rhea" id="RHEA:44644"/>
        <dbReference type="ChEBI" id="CHEBI:15377"/>
        <dbReference type="ChEBI" id="CHEBI:15378"/>
        <dbReference type="ChEBI" id="CHEBI:33019"/>
        <dbReference type="ChEBI" id="CHEBI:61560"/>
        <dbReference type="ChEBI" id="CHEBI:65317"/>
        <dbReference type="EC" id="3.6.1.9"/>
    </reaction>
</comment>
<comment type="catalytic activity">
    <reaction evidence="1">
        <text>dUTP + H2O = dUMP + diphosphate + H(+)</text>
        <dbReference type="Rhea" id="RHEA:10248"/>
        <dbReference type="ChEBI" id="CHEBI:15377"/>
        <dbReference type="ChEBI" id="CHEBI:15378"/>
        <dbReference type="ChEBI" id="CHEBI:33019"/>
        <dbReference type="ChEBI" id="CHEBI:61555"/>
        <dbReference type="ChEBI" id="CHEBI:246422"/>
        <dbReference type="EC" id="3.6.1.9"/>
    </reaction>
</comment>
<comment type="catalytic activity">
    <reaction evidence="1">
        <text>dUTP + H2O = dUMP + diphosphate + H(+)</text>
        <dbReference type="Rhea" id="RHEA:10248"/>
        <dbReference type="ChEBI" id="CHEBI:15377"/>
        <dbReference type="ChEBI" id="CHEBI:15378"/>
        <dbReference type="ChEBI" id="CHEBI:33019"/>
        <dbReference type="ChEBI" id="CHEBI:61555"/>
        <dbReference type="ChEBI" id="CHEBI:246422"/>
        <dbReference type="EC" id="3.6.1.23"/>
    </reaction>
</comment>
<comment type="catalytic activity">
    <reaction evidence="1">
        <text>dTTP + H2O = dTMP + diphosphate + H(+)</text>
        <dbReference type="Rhea" id="RHEA:28534"/>
        <dbReference type="ChEBI" id="CHEBI:15377"/>
        <dbReference type="ChEBI" id="CHEBI:15378"/>
        <dbReference type="ChEBI" id="CHEBI:33019"/>
        <dbReference type="ChEBI" id="CHEBI:37568"/>
        <dbReference type="ChEBI" id="CHEBI:63528"/>
        <dbReference type="EC" id="3.6.1.9"/>
    </reaction>
</comment>
<comment type="catalytic activity">
    <reaction evidence="1">
        <text>dCTP + H2O = dCMP + diphosphate + H(+)</text>
        <dbReference type="Rhea" id="RHEA:22636"/>
        <dbReference type="ChEBI" id="CHEBI:15377"/>
        <dbReference type="ChEBI" id="CHEBI:15378"/>
        <dbReference type="ChEBI" id="CHEBI:33019"/>
        <dbReference type="ChEBI" id="CHEBI:57566"/>
        <dbReference type="ChEBI" id="CHEBI:61481"/>
        <dbReference type="EC" id="3.6.1.9"/>
    </reaction>
</comment>
<comment type="catalytic activity">
    <reaction evidence="1">
        <text>dCTP + H2O = dCMP + diphosphate + H(+)</text>
        <dbReference type="Rhea" id="RHEA:22636"/>
        <dbReference type="ChEBI" id="CHEBI:15377"/>
        <dbReference type="ChEBI" id="CHEBI:15378"/>
        <dbReference type="ChEBI" id="CHEBI:33019"/>
        <dbReference type="ChEBI" id="CHEBI:57566"/>
        <dbReference type="ChEBI" id="CHEBI:61481"/>
        <dbReference type="EC" id="3.6.1.12"/>
    </reaction>
</comment>
<comment type="cofactor">
    <cofactor evidence="1">
        <name>Mg(2+)</name>
        <dbReference type="ChEBI" id="CHEBI:18420"/>
    </cofactor>
</comment>
<comment type="subunit">
    <text evidence="1">Monomer.</text>
</comment>
<comment type="similarity">
    <text evidence="1">Belongs to the Nudix hydrolase family. NudI subfamily.</text>
</comment>
<comment type="sequence caution" evidence="2">
    <conflict type="erroneous initiation">
        <sequence resource="EMBL-CDS" id="AAN43844"/>
    </conflict>
</comment>
<comment type="sequence caution" evidence="2">
    <conflict type="erroneous initiation">
        <sequence resource="EMBL-CDS" id="AAP17663"/>
    </conflict>
</comment>
<proteinExistence type="inferred from homology"/>
<keyword id="KW-0378">Hydrolase</keyword>
<keyword id="KW-0460">Magnesium</keyword>
<keyword id="KW-1185">Reference proteome</keyword>
<accession>Q83KB9</accession>
<accession>Q7UC66</accession>